<dbReference type="EC" id="6.3.2.6" evidence="1"/>
<dbReference type="EMBL" id="AM039952">
    <property type="protein sequence ID" value="CAJ22131.1"/>
    <property type="molecule type" value="Genomic_DNA"/>
</dbReference>
<dbReference type="RefSeq" id="WP_011346161.1">
    <property type="nucleotide sequence ID" value="NZ_CP017190.1"/>
</dbReference>
<dbReference type="SMR" id="Q3BYD2"/>
<dbReference type="STRING" id="456327.BJD11_20370"/>
<dbReference type="KEGG" id="xcv:XCV0500"/>
<dbReference type="eggNOG" id="COG0152">
    <property type="taxonomic scope" value="Bacteria"/>
</dbReference>
<dbReference type="HOGENOM" id="CLU_045637_0_2_6"/>
<dbReference type="UniPathway" id="UPA00074">
    <property type="reaction ID" value="UER00131"/>
</dbReference>
<dbReference type="Proteomes" id="UP000007069">
    <property type="component" value="Chromosome"/>
</dbReference>
<dbReference type="GO" id="GO:0005737">
    <property type="term" value="C:cytoplasm"/>
    <property type="evidence" value="ECO:0007669"/>
    <property type="project" value="TreeGrafter"/>
</dbReference>
<dbReference type="GO" id="GO:0005524">
    <property type="term" value="F:ATP binding"/>
    <property type="evidence" value="ECO:0007669"/>
    <property type="project" value="UniProtKB-KW"/>
</dbReference>
<dbReference type="GO" id="GO:0004639">
    <property type="term" value="F:phosphoribosylaminoimidazolesuccinocarboxamide synthase activity"/>
    <property type="evidence" value="ECO:0007669"/>
    <property type="project" value="UniProtKB-UniRule"/>
</dbReference>
<dbReference type="GO" id="GO:0006189">
    <property type="term" value="P:'de novo' IMP biosynthetic process"/>
    <property type="evidence" value="ECO:0007669"/>
    <property type="project" value="UniProtKB-UniRule"/>
</dbReference>
<dbReference type="CDD" id="cd01414">
    <property type="entry name" value="SAICAR_synt_Sc"/>
    <property type="match status" value="1"/>
</dbReference>
<dbReference type="FunFam" id="3.30.200.20:FF:000365">
    <property type="entry name" value="Phosphoribosylaminoimidazole-succinocarboxamide synthase"/>
    <property type="match status" value="1"/>
</dbReference>
<dbReference type="FunFam" id="3.30.470.20:FF:000015">
    <property type="entry name" value="Phosphoribosylaminoimidazole-succinocarboxamide synthase"/>
    <property type="match status" value="1"/>
</dbReference>
<dbReference type="Gene3D" id="3.30.470.20">
    <property type="entry name" value="ATP-grasp fold, B domain"/>
    <property type="match status" value="1"/>
</dbReference>
<dbReference type="Gene3D" id="3.30.200.20">
    <property type="entry name" value="Phosphorylase Kinase, domain 1"/>
    <property type="match status" value="1"/>
</dbReference>
<dbReference type="HAMAP" id="MF_00137">
    <property type="entry name" value="SAICAR_synth"/>
    <property type="match status" value="1"/>
</dbReference>
<dbReference type="InterPro" id="IPR028923">
    <property type="entry name" value="SAICAR_synt/ADE2_N"/>
</dbReference>
<dbReference type="InterPro" id="IPR001636">
    <property type="entry name" value="SAICAR_synth"/>
</dbReference>
<dbReference type="InterPro" id="IPR018236">
    <property type="entry name" value="SAICAR_synthetase_CS"/>
</dbReference>
<dbReference type="NCBIfam" id="NF010568">
    <property type="entry name" value="PRK13961.1"/>
    <property type="match status" value="1"/>
</dbReference>
<dbReference type="NCBIfam" id="TIGR00081">
    <property type="entry name" value="purC"/>
    <property type="match status" value="1"/>
</dbReference>
<dbReference type="PANTHER" id="PTHR43700">
    <property type="entry name" value="PHOSPHORIBOSYLAMINOIMIDAZOLE-SUCCINOCARBOXAMIDE SYNTHASE"/>
    <property type="match status" value="1"/>
</dbReference>
<dbReference type="PANTHER" id="PTHR43700:SF1">
    <property type="entry name" value="PHOSPHORIBOSYLAMINOIMIDAZOLE-SUCCINOCARBOXAMIDE SYNTHASE"/>
    <property type="match status" value="1"/>
</dbReference>
<dbReference type="Pfam" id="PF01259">
    <property type="entry name" value="SAICAR_synt"/>
    <property type="match status" value="1"/>
</dbReference>
<dbReference type="SUPFAM" id="SSF56104">
    <property type="entry name" value="SAICAR synthase-like"/>
    <property type="match status" value="1"/>
</dbReference>
<dbReference type="PROSITE" id="PS01057">
    <property type="entry name" value="SAICAR_SYNTHETASE_1"/>
    <property type="match status" value="1"/>
</dbReference>
<dbReference type="PROSITE" id="PS01058">
    <property type="entry name" value="SAICAR_SYNTHETASE_2"/>
    <property type="match status" value="1"/>
</dbReference>
<accession>Q3BYD2</accession>
<name>PUR7_XANE5</name>
<evidence type="ECO:0000255" key="1">
    <source>
        <dbReference type="HAMAP-Rule" id="MF_00137"/>
    </source>
</evidence>
<reference key="1">
    <citation type="journal article" date="2005" name="J. Bacteriol.">
        <title>Insights into genome plasticity and pathogenicity of the plant pathogenic Bacterium Xanthomonas campestris pv. vesicatoria revealed by the complete genome sequence.</title>
        <authorList>
            <person name="Thieme F."/>
            <person name="Koebnik R."/>
            <person name="Bekel T."/>
            <person name="Berger C."/>
            <person name="Boch J."/>
            <person name="Buettner D."/>
            <person name="Caldana C."/>
            <person name="Gaigalat L."/>
            <person name="Goesmann A."/>
            <person name="Kay S."/>
            <person name="Kirchner O."/>
            <person name="Lanz C."/>
            <person name="Linke B."/>
            <person name="McHardy A.C."/>
            <person name="Meyer F."/>
            <person name="Mittenhuber G."/>
            <person name="Nies D.H."/>
            <person name="Niesbach-Kloesgen U."/>
            <person name="Patschkowski T."/>
            <person name="Rueckert C."/>
            <person name="Rupp O."/>
            <person name="Schneiker S."/>
            <person name="Schuster S.C."/>
            <person name="Vorhoelter F.J."/>
            <person name="Weber E."/>
            <person name="Puehler A."/>
            <person name="Bonas U."/>
            <person name="Bartels D."/>
            <person name="Kaiser O."/>
        </authorList>
    </citation>
    <scope>NUCLEOTIDE SEQUENCE [LARGE SCALE GENOMIC DNA]</scope>
    <source>
        <strain>85-10</strain>
    </source>
</reference>
<feature type="chain" id="PRO_1000018810" description="Phosphoribosylaminoimidazole-succinocarboxamide synthase">
    <location>
        <begin position="1"/>
        <end position="308"/>
    </location>
</feature>
<comment type="catalytic activity">
    <reaction evidence="1">
        <text>5-amino-1-(5-phospho-D-ribosyl)imidazole-4-carboxylate + L-aspartate + ATP = (2S)-2-[5-amino-1-(5-phospho-beta-D-ribosyl)imidazole-4-carboxamido]succinate + ADP + phosphate + 2 H(+)</text>
        <dbReference type="Rhea" id="RHEA:22628"/>
        <dbReference type="ChEBI" id="CHEBI:15378"/>
        <dbReference type="ChEBI" id="CHEBI:29991"/>
        <dbReference type="ChEBI" id="CHEBI:30616"/>
        <dbReference type="ChEBI" id="CHEBI:43474"/>
        <dbReference type="ChEBI" id="CHEBI:58443"/>
        <dbReference type="ChEBI" id="CHEBI:77657"/>
        <dbReference type="ChEBI" id="CHEBI:456216"/>
        <dbReference type="EC" id="6.3.2.6"/>
    </reaction>
</comment>
<comment type="pathway">
    <text evidence="1">Purine metabolism; IMP biosynthesis via de novo pathway; 5-amino-1-(5-phospho-D-ribosyl)imidazole-4-carboxamide from 5-amino-1-(5-phospho-D-ribosyl)imidazole-4-carboxylate: step 1/2.</text>
</comment>
<comment type="similarity">
    <text evidence="1">Belongs to the SAICAR synthetase family.</text>
</comment>
<gene>
    <name evidence="1" type="primary">purC</name>
    <name type="ordered locus">XCV0500</name>
</gene>
<proteinExistence type="inferred from homology"/>
<organism>
    <name type="scientific">Xanthomonas euvesicatoria pv. vesicatoria (strain 85-10)</name>
    <name type="common">Xanthomonas campestris pv. vesicatoria</name>
    <dbReference type="NCBI Taxonomy" id="316273"/>
    <lineage>
        <taxon>Bacteria</taxon>
        <taxon>Pseudomonadati</taxon>
        <taxon>Pseudomonadota</taxon>
        <taxon>Gammaproteobacteria</taxon>
        <taxon>Lysobacterales</taxon>
        <taxon>Lysobacteraceae</taxon>
        <taxon>Xanthomonas</taxon>
    </lineage>
</organism>
<keyword id="KW-0067">ATP-binding</keyword>
<keyword id="KW-0436">Ligase</keyword>
<keyword id="KW-0547">Nucleotide-binding</keyword>
<keyword id="KW-0658">Purine biosynthesis</keyword>
<protein>
    <recommendedName>
        <fullName evidence="1">Phosphoribosylaminoimidazole-succinocarboxamide synthase</fullName>
        <ecNumber evidence="1">6.3.2.6</ecNumber>
    </recommendedName>
    <alternativeName>
        <fullName evidence="1">SAICAR synthetase</fullName>
    </alternativeName>
</protein>
<sequence>MSTTLLQSDLPGLPLRHRGKVRDVFDLPRDRLPADAPPGDYLLMVATDRLSAFDVVLPDPIPGKGEMLCQVSNFWFHKTEHLMPNHLMDIRVEQVLPEGVDPALYAKRAVVTRKLKPVPVEAIARGYVIGSGWKDYQRTGKISGIELPDGLRQAEKLPEPIFTPSTKAAVGDHDENIDFDAMVKTVGAELAERVRDATLRIYRFAADFAAERGILLADTKFEFGTDADGRLYIMDEMLTPDSSRYWPADQYEPGTSPPSYDKQFVRDYLETLDWGKTAPGPRLPADVIDRTRAKYAEALQRLADISVD</sequence>